<proteinExistence type="inferred from homology"/>
<dbReference type="EMBL" id="D31785">
    <property type="protein sequence ID" value="BAA06572.2"/>
    <property type="molecule type" value="Genomic_DNA"/>
</dbReference>
<dbReference type="PIR" id="S58749">
    <property type="entry name" value="S58749"/>
</dbReference>
<dbReference type="RefSeq" id="NP_038217.1">
    <property type="nucleotide sequence ID" value="NC_001762.1"/>
</dbReference>
<dbReference type="SMR" id="P48877"/>
<dbReference type="GeneID" id="800538"/>
<dbReference type="GO" id="GO:0005743">
    <property type="term" value="C:mitochondrial inner membrane"/>
    <property type="evidence" value="ECO:0007669"/>
    <property type="project" value="UniProtKB-SubCell"/>
</dbReference>
<dbReference type="GO" id="GO:0045275">
    <property type="term" value="C:respiratory chain complex III"/>
    <property type="evidence" value="ECO:0007669"/>
    <property type="project" value="InterPro"/>
</dbReference>
<dbReference type="GO" id="GO:0046872">
    <property type="term" value="F:metal ion binding"/>
    <property type="evidence" value="ECO:0007669"/>
    <property type="project" value="UniProtKB-KW"/>
</dbReference>
<dbReference type="GO" id="GO:0008121">
    <property type="term" value="F:ubiquinol-cytochrome-c reductase activity"/>
    <property type="evidence" value="ECO:0007669"/>
    <property type="project" value="InterPro"/>
</dbReference>
<dbReference type="GO" id="GO:0006122">
    <property type="term" value="P:mitochondrial electron transport, ubiquinol to cytochrome c"/>
    <property type="evidence" value="ECO:0007669"/>
    <property type="project" value="TreeGrafter"/>
</dbReference>
<dbReference type="CDD" id="cd00290">
    <property type="entry name" value="cytochrome_b_C"/>
    <property type="match status" value="1"/>
</dbReference>
<dbReference type="CDD" id="cd00284">
    <property type="entry name" value="Cytochrome_b_N"/>
    <property type="match status" value="1"/>
</dbReference>
<dbReference type="FunFam" id="1.20.810.10:FF:000002">
    <property type="entry name" value="Cytochrome b"/>
    <property type="match status" value="1"/>
</dbReference>
<dbReference type="Gene3D" id="1.20.810.10">
    <property type="entry name" value="Cytochrome Bc1 Complex, Chain C"/>
    <property type="match status" value="1"/>
</dbReference>
<dbReference type="InterPro" id="IPR005798">
    <property type="entry name" value="Cyt_b/b6_C"/>
</dbReference>
<dbReference type="InterPro" id="IPR036150">
    <property type="entry name" value="Cyt_b/b6_C_sf"/>
</dbReference>
<dbReference type="InterPro" id="IPR005797">
    <property type="entry name" value="Cyt_b/b6_N"/>
</dbReference>
<dbReference type="InterPro" id="IPR027387">
    <property type="entry name" value="Cytb/b6-like_sf"/>
</dbReference>
<dbReference type="InterPro" id="IPR030689">
    <property type="entry name" value="Cytochrome_b"/>
</dbReference>
<dbReference type="InterPro" id="IPR048260">
    <property type="entry name" value="Cytochrome_b_C_euk/bac"/>
</dbReference>
<dbReference type="InterPro" id="IPR048259">
    <property type="entry name" value="Cytochrome_b_N_euk/bac"/>
</dbReference>
<dbReference type="InterPro" id="IPR016174">
    <property type="entry name" value="Di-haem_cyt_TM"/>
</dbReference>
<dbReference type="PANTHER" id="PTHR19271">
    <property type="entry name" value="CYTOCHROME B"/>
    <property type="match status" value="1"/>
</dbReference>
<dbReference type="PANTHER" id="PTHR19271:SF16">
    <property type="entry name" value="CYTOCHROME B"/>
    <property type="match status" value="1"/>
</dbReference>
<dbReference type="Pfam" id="PF00032">
    <property type="entry name" value="Cytochrom_B_C"/>
    <property type="match status" value="1"/>
</dbReference>
<dbReference type="Pfam" id="PF00033">
    <property type="entry name" value="Cytochrome_B"/>
    <property type="match status" value="1"/>
</dbReference>
<dbReference type="PIRSF" id="PIRSF038885">
    <property type="entry name" value="COB"/>
    <property type="match status" value="1"/>
</dbReference>
<dbReference type="SUPFAM" id="SSF81648">
    <property type="entry name" value="a domain/subunit of cytochrome bc1 complex (Ubiquinol-cytochrome c reductase)"/>
    <property type="match status" value="1"/>
</dbReference>
<dbReference type="SUPFAM" id="SSF81342">
    <property type="entry name" value="Transmembrane di-heme cytochromes"/>
    <property type="match status" value="1"/>
</dbReference>
<dbReference type="PROSITE" id="PS51003">
    <property type="entry name" value="CYTB_CTER"/>
    <property type="match status" value="1"/>
</dbReference>
<dbReference type="PROSITE" id="PS51002">
    <property type="entry name" value="CYTB_NTER"/>
    <property type="match status" value="1"/>
</dbReference>
<evidence type="ECO:0000250" key="1"/>
<evidence type="ECO:0000250" key="2">
    <source>
        <dbReference type="UniProtKB" id="P00157"/>
    </source>
</evidence>
<evidence type="ECO:0000250" key="3">
    <source>
        <dbReference type="UniProtKB" id="P00163"/>
    </source>
</evidence>
<evidence type="ECO:0000255" key="4">
    <source>
        <dbReference type="PROSITE-ProRule" id="PRU00967"/>
    </source>
</evidence>
<evidence type="ECO:0000255" key="5">
    <source>
        <dbReference type="PROSITE-ProRule" id="PRU00968"/>
    </source>
</evidence>
<accession>P48877</accession>
<name>CYB_WICCA</name>
<gene>
    <name type="primary">COB</name>
    <name type="synonym">CYTB</name>
</gene>
<protein>
    <recommendedName>
        <fullName>Cytochrome b</fullName>
    </recommendedName>
    <alternativeName>
        <fullName>Complex III subunit 3</fullName>
    </alternativeName>
    <alternativeName>
        <fullName>Complex III subunit III</fullName>
    </alternativeName>
    <alternativeName>
        <fullName>Cytochrome b-c1 complex subunit 3</fullName>
    </alternativeName>
    <alternativeName>
        <fullName>Ubiquinol-cytochrome-c reductase complex cytochrome b subunit</fullName>
    </alternativeName>
</protein>
<feature type="chain" id="PRO_0000061752" description="Cytochrome b">
    <location>
        <begin position="1"/>
        <end position="386"/>
    </location>
</feature>
<feature type="transmembrane region" description="Helical" evidence="3">
    <location>
        <begin position="32"/>
        <end position="52"/>
    </location>
</feature>
<feature type="transmembrane region" description="Helical" evidence="3">
    <location>
        <begin position="76"/>
        <end position="98"/>
    </location>
</feature>
<feature type="transmembrane region" description="Helical" evidence="3">
    <location>
        <begin position="113"/>
        <end position="133"/>
    </location>
</feature>
<feature type="transmembrane region" description="Helical" evidence="3">
    <location>
        <begin position="179"/>
        <end position="199"/>
    </location>
</feature>
<feature type="transmembrane region" description="Helical" evidence="3">
    <location>
        <begin position="225"/>
        <end position="245"/>
    </location>
</feature>
<feature type="transmembrane region" description="Helical" evidence="3">
    <location>
        <begin position="289"/>
        <end position="309"/>
    </location>
</feature>
<feature type="transmembrane region" description="Helical" evidence="3">
    <location>
        <begin position="321"/>
        <end position="341"/>
    </location>
</feature>
<feature type="transmembrane region" description="Helical" evidence="3">
    <location>
        <begin position="348"/>
        <end position="368"/>
    </location>
</feature>
<feature type="binding site" description="axial binding residue" evidence="5">
    <location>
        <position position="82"/>
    </location>
    <ligand>
        <name>heme b</name>
        <dbReference type="ChEBI" id="CHEBI:60344"/>
        <label>b562</label>
    </ligand>
    <ligandPart>
        <name>Fe</name>
        <dbReference type="ChEBI" id="CHEBI:18248"/>
    </ligandPart>
</feature>
<feature type="binding site" description="axial binding residue" evidence="5">
    <location>
        <position position="96"/>
    </location>
    <ligand>
        <name>heme b</name>
        <dbReference type="ChEBI" id="CHEBI:60344"/>
        <label>b566</label>
    </ligand>
    <ligandPart>
        <name>Fe</name>
        <dbReference type="ChEBI" id="CHEBI:18248"/>
    </ligandPart>
</feature>
<feature type="binding site" description="axial binding residue" evidence="5">
    <location>
        <position position="183"/>
    </location>
    <ligand>
        <name>heme b</name>
        <dbReference type="ChEBI" id="CHEBI:60344"/>
        <label>b562</label>
    </ligand>
    <ligandPart>
        <name>Fe</name>
        <dbReference type="ChEBI" id="CHEBI:18248"/>
    </ligandPart>
</feature>
<feature type="binding site" description="axial binding residue" evidence="5">
    <location>
        <position position="197"/>
    </location>
    <ligand>
        <name>heme b</name>
        <dbReference type="ChEBI" id="CHEBI:60344"/>
        <label>b566</label>
    </ligand>
    <ligandPart>
        <name>Fe</name>
        <dbReference type="ChEBI" id="CHEBI:18248"/>
    </ligandPart>
</feature>
<feature type="binding site" evidence="2">
    <location>
        <position position="202"/>
    </location>
    <ligand>
        <name>a ubiquinone</name>
        <dbReference type="ChEBI" id="CHEBI:16389"/>
    </ligand>
</feature>
<organism>
    <name type="scientific">Wickerhamomyces canadensis</name>
    <name type="common">Yeast</name>
    <name type="synonym">Pichia canadensis</name>
    <dbReference type="NCBI Taxonomy" id="1156965"/>
    <lineage>
        <taxon>Eukaryota</taxon>
        <taxon>Fungi</taxon>
        <taxon>Dikarya</taxon>
        <taxon>Ascomycota</taxon>
        <taxon>Saccharomycotina</taxon>
        <taxon>Saccharomycetes</taxon>
        <taxon>Phaffomycetales</taxon>
        <taxon>Wickerhamomycetaceae</taxon>
        <taxon>Wickerhamomyces</taxon>
    </lineage>
</organism>
<comment type="function">
    <text evidence="3">Component of the ubiquinol-cytochrome c reductase complex (complex III or cytochrome b-c1 complex) that is part of the mitochondrial respiratory chain. The b-c1 complex mediates electron transfer from ubiquinol to cytochrome c. Contributes to the generation of a proton gradient across the mitochondrial membrane that is then used for ATP synthesis.</text>
</comment>
<comment type="cofactor">
    <cofactor evidence="3">
        <name>heme b</name>
        <dbReference type="ChEBI" id="CHEBI:60344"/>
    </cofactor>
    <text evidence="3">Binds 2 heme b groups non-covalently.</text>
</comment>
<comment type="subunit">
    <text evidence="3">Fungal cytochrome b-c1 complex contains 10 subunits; 3 respiratory subunits, 2 core proteins and 5 low-molecular weight proteins. Cytochrome b-c1 complex is a homodimer.</text>
</comment>
<comment type="subcellular location">
    <subcellularLocation>
        <location evidence="3">Mitochondrion inner membrane</location>
        <topology evidence="3">Multi-pass membrane protein</topology>
    </subcellularLocation>
</comment>
<comment type="miscellaneous">
    <text evidence="1">Heme 1 (or BL or b562) is low-potential and absorbs at about 562 nm, and heme 2 (or BH or b566) is high-potential and absorbs at about 566 nm.</text>
</comment>
<comment type="similarity">
    <text evidence="4 5">Belongs to the cytochrome b family.</text>
</comment>
<comment type="caution">
    <text evidence="3">The protein contains only eight transmembrane helices, not nine as predicted by bioinformatics tools.</text>
</comment>
<geneLocation type="mitochondrion"/>
<sequence>MAIRKSQVYLSLANSYLIDSPQPSTLNYWYNLGSLLGLCLVIQIASGIFLAMHYSSHIDLAFASVEHIMRDVNYGYLIRYIHANGASFFFVCMYAHIGKAIYYGSYKSPRVLVWVIGVVIFIITMATAFLGYCWVYGQMSHWGATVITNLFSAIPFIGKDLVPFIWGSFSVSNPTIQRFFALHYLCPFILAALVIMHLMALHVHGSSNPLGISSNIDRLPFHGYFVFKDLVTVFVFLLIFSLFVFFSPNTLGHPDNYIPGNPLVTPASIVPEWYLLPFYAILRSIPDKLGGVIAMFAAILILLVLPVTDRSVVRGNTFKIISKTFFFLFLYNFILLGQLGQLHVEVPFIQLGQFATLNYFLYFIFIVPVVSTLENILFYIGRVHNN</sequence>
<reference key="1">
    <citation type="journal article" date="1995" name="Curr. Genet.">
        <title>The complete mitochondrial DNA sequence of Hansenula wingei reveals new characteristics of yeast mitochondria.</title>
        <authorList>
            <person name="Sekito T."/>
            <person name="Okamoto K."/>
            <person name="Kitano H."/>
            <person name="Yoshida K."/>
        </authorList>
    </citation>
    <scope>NUCLEOTIDE SEQUENCE [LARGE SCALE GENOMIC DNA]</scope>
    <source>
        <strain>21</strain>
    </source>
</reference>
<keyword id="KW-0249">Electron transport</keyword>
<keyword id="KW-0349">Heme</keyword>
<keyword id="KW-0408">Iron</keyword>
<keyword id="KW-0472">Membrane</keyword>
<keyword id="KW-0479">Metal-binding</keyword>
<keyword id="KW-0496">Mitochondrion</keyword>
<keyword id="KW-0999">Mitochondrion inner membrane</keyword>
<keyword id="KW-0679">Respiratory chain</keyword>
<keyword id="KW-0812">Transmembrane</keyword>
<keyword id="KW-1133">Transmembrane helix</keyword>
<keyword id="KW-0813">Transport</keyword>
<keyword id="KW-0830">Ubiquinone</keyword>